<comment type="function">
    <text evidence="1">One of the primary rRNA binding proteins, this protein initially binds near the 5'-end of the 23S rRNA. It is important during the early stages of 50S assembly. It makes multiple contacts with different domains of the 23S rRNA in the assembled 50S subunit and ribosome.</text>
</comment>
<comment type="function">
    <text evidence="1">Forms part of the polypeptide exit tunnel.</text>
</comment>
<comment type="subunit">
    <text evidence="1">Part of the 50S ribosomal subunit.</text>
</comment>
<comment type="similarity">
    <text evidence="1">Belongs to the universal ribosomal protein uL4 family.</text>
</comment>
<comment type="sequence caution" evidence="2">
    <conflict type="erroneous initiation">
        <sequence resource="EMBL-CDS" id="BAC50664"/>
    </conflict>
</comment>
<keyword id="KW-1185">Reference proteome</keyword>
<keyword id="KW-0687">Ribonucleoprotein</keyword>
<keyword id="KW-0689">Ribosomal protein</keyword>
<keyword id="KW-0694">RNA-binding</keyword>
<keyword id="KW-0699">rRNA-binding</keyword>
<sequence>MELKVTTLEGKEAGSVQLSDAIFGLEPRQDIIARCVQWQLNKRQAGTHKAKGRAEIWRTGKKMYKQKGTGGARHGSARVPQFRGGGRAFGPVVRSHATDLPKKVRALALKHALSAKAKDGDLLVIDKAALEAAKTKALLGHFSGLGLTNALIIDGAELNNGFAAAARNIPNMDVLPIQGINVYDILRRQKLVLTKAAIDALEARFK</sequence>
<name>RL4_BRADU</name>
<reference key="1">
    <citation type="journal article" date="2002" name="DNA Res.">
        <title>Complete genomic sequence of nitrogen-fixing symbiotic bacterium Bradyrhizobium japonicum USDA110.</title>
        <authorList>
            <person name="Kaneko T."/>
            <person name="Nakamura Y."/>
            <person name="Sato S."/>
            <person name="Minamisawa K."/>
            <person name="Uchiumi T."/>
            <person name="Sasamoto S."/>
            <person name="Watanabe A."/>
            <person name="Idesawa K."/>
            <person name="Iriguchi M."/>
            <person name="Kawashima K."/>
            <person name="Kohara M."/>
            <person name="Matsumoto M."/>
            <person name="Shimpo S."/>
            <person name="Tsuruoka H."/>
            <person name="Wada T."/>
            <person name="Yamada M."/>
            <person name="Tabata S."/>
        </authorList>
    </citation>
    <scope>NUCLEOTIDE SEQUENCE [LARGE SCALE GENOMIC DNA]</scope>
    <source>
        <strain>JCM 10833 / BCRC 13528 / IAM 13628 / NBRC 14792 / USDA 110</strain>
    </source>
</reference>
<protein>
    <recommendedName>
        <fullName evidence="1">Large ribosomal subunit protein uL4</fullName>
    </recommendedName>
    <alternativeName>
        <fullName evidence="2">50S ribosomal protein L4</fullName>
    </alternativeName>
</protein>
<proteinExistence type="inferred from homology"/>
<gene>
    <name evidence="1" type="primary">rplD</name>
    <name type="ordered locus">bll5399</name>
</gene>
<organism>
    <name type="scientific">Bradyrhizobium diazoefficiens (strain JCM 10833 / BCRC 13528 / IAM 13628 / NBRC 14792 / USDA 110)</name>
    <dbReference type="NCBI Taxonomy" id="224911"/>
    <lineage>
        <taxon>Bacteria</taxon>
        <taxon>Pseudomonadati</taxon>
        <taxon>Pseudomonadota</taxon>
        <taxon>Alphaproteobacteria</taxon>
        <taxon>Hyphomicrobiales</taxon>
        <taxon>Nitrobacteraceae</taxon>
        <taxon>Bradyrhizobium</taxon>
    </lineage>
</organism>
<dbReference type="EMBL" id="BA000040">
    <property type="protein sequence ID" value="BAC50664.1"/>
    <property type="status" value="ALT_INIT"/>
    <property type="molecule type" value="Genomic_DNA"/>
</dbReference>
<dbReference type="RefSeq" id="NP_772039.2">
    <property type="nucleotide sequence ID" value="NC_004463.1"/>
</dbReference>
<dbReference type="RefSeq" id="WP_011088150.1">
    <property type="nucleotide sequence ID" value="NZ_CP011360.1"/>
</dbReference>
<dbReference type="SMR" id="Q89J85"/>
<dbReference type="FunCoup" id="Q89J85">
    <property type="interactions" value="902"/>
</dbReference>
<dbReference type="STRING" id="224911.AAV28_24405"/>
<dbReference type="EnsemblBacteria" id="BAC50664">
    <property type="protein sequence ID" value="BAC50664"/>
    <property type="gene ID" value="BAC50664"/>
</dbReference>
<dbReference type="GeneID" id="64070610"/>
<dbReference type="KEGG" id="bja:bll5399"/>
<dbReference type="PATRIC" id="fig|224911.44.peg.5298"/>
<dbReference type="eggNOG" id="COG0088">
    <property type="taxonomic scope" value="Bacteria"/>
</dbReference>
<dbReference type="HOGENOM" id="CLU_041575_5_1_5"/>
<dbReference type="InParanoid" id="Q89J85"/>
<dbReference type="OrthoDB" id="9803201at2"/>
<dbReference type="PhylomeDB" id="Q89J85"/>
<dbReference type="Proteomes" id="UP000002526">
    <property type="component" value="Chromosome"/>
</dbReference>
<dbReference type="GO" id="GO:1990904">
    <property type="term" value="C:ribonucleoprotein complex"/>
    <property type="evidence" value="ECO:0007669"/>
    <property type="project" value="UniProtKB-KW"/>
</dbReference>
<dbReference type="GO" id="GO:0005840">
    <property type="term" value="C:ribosome"/>
    <property type="evidence" value="ECO:0007669"/>
    <property type="project" value="UniProtKB-KW"/>
</dbReference>
<dbReference type="GO" id="GO:0019843">
    <property type="term" value="F:rRNA binding"/>
    <property type="evidence" value="ECO:0007669"/>
    <property type="project" value="UniProtKB-UniRule"/>
</dbReference>
<dbReference type="GO" id="GO:0003735">
    <property type="term" value="F:structural constituent of ribosome"/>
    <property type="evidence" value="ECO:0000318"/>
    <property type="project" value="GO_Central"/>
</dbReference>
<dbReference type="GO" id="GO:0006412">
    <property type="term" value="P:translation"/>
    <property type="evidence" value="ECO:0007669"/>
    <property type="project" value="UniProtKB-UniRule"/>
</dbReference>
<dbReference type="FunFam" id="3.40.1370.10:FF:000017">
    <property type="entry name" value="50S ribosomal protein L4"/>
    <property type="match status" value="1"/>
</dbReference>
<dbReference type="Gene3D" id="3.40.1370.10">
    <property type="match status" value="1"/>
</dbReference>
<dbReference type="HAMAP" id="MF_01328_B">
    <property type="entry name" value="Ribosomal_uL4_B"/>
    <property type="match status" value="1"/>
</dbReference>
<dbReference type="InterPro" id="IPR002136">
    <property type="entry name" value="Ribosomal_uL4"/>
</dbReference>
<dbReference type="InterPro" id="IPR013005">
    <property type="entry name" value="Ribosomal_uL4-like"/>
</dbReference>
<dbReference type="InterPro" id="IPR023574">
    <property type="entry name" value="Ribosomal_uL4_dom_sf"/>
</dbReference>
<dbReference type="NCBIfam" id="TIGR03953">
    <property type="entry name" value="rplD_bact"/>
    <property type="match status" value="1"/>
</dbReference>
<dbReference type="PANTHER" id="PTHR10746">
    <property type="entry name" value="50S RIBOSOMAL PROTEIN L4"/>
    <property type="match status" value="1"/>
</dbReference>
<dbReference type="PANTHER" id="PTHR10746:SF6">
    <property type="entry name" value="LARGE RIBOSOMAL SUBUNIT PROTEIN UL4M"/>
    <property type="match status" value="1"/>
</dbReference>
<dbReference type="Pfam" id="PF00573">
    <property type="entry name" value="Ribosomal_L4"/>
    <property type="match status" value="1"/>
</dbReference>
<dbReference type="SUPFAM" id="SSF52166">
    <property type="entry name" value="Ribosomal protein L4"/>
    <property type="match status" value="1"/>
</dbReference>
<feature type="chain" id="PRO_0000129191" description="Large ribosomal subunit protein uL4">
    <location>
        <begin position="1"/>
        <end position="206"/>
    </location>
</feature>
<accession>Q89J85</accession>
<evidence type="ECO:0000255" key="1">
    <source>
        <dbReference type="HAMAP-Rule" id="MF_01328"/>
    </source>
</evidence>
<evidence type="ECO:0000305" key="2"/>